<protein>
    <recommendedName>
        <fullName evidence="1">2-oxoglutarate dehydrogenase E1 component</fullName>
        <ecNumber evidence="1">1.2.4.2</ecNumber>
    </recommendedName>
    <alternativeName>
        <fullName evidence="1">Alpha-ketoglutarate dehydrogenase</fullName>
    </alternativeName>
</protein>
<feature type="chain" id="PRO_0000162164" description="2-oxoglutarate dehydrogenase E1 component">
    <location>
        <begin position="1"/>
        <end position="955"/>
    </location>
</feature>
<name>ODO1_BACCZ</name>
<gene>
    <name evidence="1" type="primary">odhA</name>
    <name type="ordered locus">BCE33L1152</name>
</gene>
<evidence type="ECO:0000255" key="1">
    <source>
        <dbReference type="HAMAP-Rule" id="MF_01169"/>
    </source>
</evidence>
<proteinExistence type="inferred from homology"/>
<sequence length="955" mass="106476">MTRKNTTTNPWAKFHGPNLGYVIEQYDLYVTGAGSVDPELQELFEIFGAPSFQDDVVTGDNTATHFSPQNTGNIEKILKVVQLVEQIRSFGHTLAHINPMEDAANGQSLLERAMNELSDADLKAIPAKTVWQDAPEGIHTALDVIHRLKEVYTQSLAYEFSHIQDSEERAWLHQMVESNSLRQPLSNKKRTALLKRLTAVEGFEQFLHKTFVGQKRFSIEGVDMLVPVLDEIVLEGAKNGVEDVMIGMAHRGRLSVLAHVLEKPYSHMFAEFKHAKIEGAVANSGWTGDVKYHLGREQVVSNEEVSTRVTLANNPSHLEFVNPVVEGFARAAQENRKKSGLPEQDTSKSFVILVHGDAAFPGQGIVSETLNLSRLNAYQTGGTIHVIANNAVGFTTDSYDSRSTKYSSDLAKGFDIPIVHVNADDPEACLAAANLAIQYRMLFKKDFLIDLIGYRRYGHNEMDDPAVTQPQVYKKIKNHPTVRAIYADQLQAAGVLNADEIETITQFTQEQLKSDYAQVPPADTSDATIHVKVPDVVAKGIQPIDTGVELDSLRAINEGLLSWPEGFNVYPKVKKILERRKDALEENGKIEWALAESLAFASILQEGTPIRLTGQDSQRGTFAHRHIVLHDTDTNETYSPLHRLPNINASFSVHNSPLSEAAVVGYEYGYNVFAPETLVMWEAQYGDFSNTAQALFDQYVSAGRAKWGQKSGLVLLLPHGYEGQGPEHSSARPERFLQLAAENNWTVANLTSAAQYFHILRRQASILGTEAVRPLVLMTPKSLLRHPLTLSTASQLSEGRFQPALEQENLGTKPNKVKRLVLSTGKMAIDLAAEIESGKHEYNLDEIHIVRIEQLYPFPAEKVQSIIKRFKNLEEIIWVQEEPRNMGAWHYMAPILFELAGDKVKTGYIGRPDRSSPSGGDPFAHKAEQELIVAHALDVKYNFRQDKLEIEVFSN</sequence>
<reference key="1">
    <citation type="journal article" date="2006" name="J. Bacteriol.">
        <title>Pathogenomic sequence analysis of Bacillus cereus and Bacillus thuringiensis isolates closely related to Bacillus anthracis.</title>
        <authorList>
            <person name="Han C.S."/>
            <person name="Xie G."/>
            <person name="Challacombe J.F."/>
            <person name="Altherr M.R."/>
            <person name="Bhotika S.S."/>
            <person name="Bruce D."/>
            <person name="Campbell C.S."/>
            <person name="Campbell M.L."/>
            <person name="Chen J."/>
            <person name="Chertkov O."/>
            <person name="Cleland C."/>
            <person name="Dimitrijevic M."/>
            <person name="Doggett N.A."/>
            <person name="Fawcett J.J."/>
            <person name="Glavina T."/>
            <person name="Goodwin L.A."/>
            <person name="Hill K.K."/>
            <person name="Hitchcock P."/>
            <person name="Jackson P.J."/>
            <person name="Keim P."/>
            <person name="Kewalramani A.R."/>
            <person name="Longmire J."/>
            <person name="Lucas S."/>
            <person name="Malfatti S."/>
            <person name="McMurry K."/>
            <person name="Meincke L.J."/>
            <person name="Misra M."/>
            <person name="Moseman B.L."/>
            <person name="Mundt M."/>
            <person name="Munk A.C."/>
            <person name="Okinaka R.T."/>
            <person name="Parson-Quintana B."/>
            <person name="Reilly L.P."/>
            <person name="Richardson P."/>
            <person name="Robinson D.L."/>
            <person name="Rubin E."/>
            <person name="Saunders E."/>
            <person name="Tapia R."/>
            <person name="Tesmer J.G."/>
            <person name="Thayer N."/>
            <person name="Thompson L.S."/>
            <person name="Tice H."/>
            <person name="Ticknor L.O."/>
            <person name="Wills P.L."/>
            <person name="Brettin T.S."/>
            <person name="Gilna P."/>
        </authorList>
    </citation>
    <scope>NUCLEOTIDE SEQUENCE [LARGE SCALE GENOMIC DNA]</scope>
    <source>
        <strain>ZK / E33L</strain>
    </source>
</reference>
<dbReference type="EC" id="1.2.4.2" evidence="1"/>
<dbReference type="EMBL" id="CP000001">
    <property type="protein sequence ID" value="AAU19096.1"/>
    <property type="molecule type" value="Genomic_DNA"/>
</dbReference>
<dbReference type="RefSeq" id="WP_000197164.1">
    <property type="nucleotide sequence ID" value="NC_006274.1"/>
</dbReference>
<dbReference type="SMR" id="Q63EB1"/>
<dbReference type="KEGG" id="bcz:BCE33L1152"/>
<dbReference type="PATRIC" id="fig|288681.22.peg.4412"/>
<dbReference type="Proteomes" id="UP000002612">
    <property type="component" value="Chromosome"/>
</dbReference>
<dbReference type="GO" id="GO:0005829">
    <property type="term" value="C:cytosol"/>
    <property type="evidence" value="ECO:0007669"/>
    <property type="project" value="TreeGrafter"/>
</dbReference>
<dbReference type="GO" id="GO:0045252">
    <property type="term" value="C:oxoglutarate dehydrogenase complex"/>
    <property type="evidence" value="ECO:0007669"/>
    <property type="project" value="TreeGrafter"/>
</dbReference>
<dbReference type="GO" id="GO:0004591">
    <property type="term" value="F:oxoglutarate dehydrogenase (succinyl-transferring) activity"/>
    <property type="evidence" value="ECO:0007669"/>
    <property type="project" value="UniProtKB-UniRule"/>
</dbReference>
<dbReference type="GO" id="GO:0030976">
    <property type="term" value="F:thiamine pyrophosphate binding"/>
    <property type="evidence" value="ECO:0007669"/>
    <property type="project" value="UniProtKB-UniRule"/>
</dbReference>
<dbReference type="GO" id="GO:0006096">
    <property type="term" value="P:glycolytic process"/>
    <property type="evidence" value="ECO:0007669"/>
    <property type="project" value="UniProtKB-UniRule"/>
</dbReference>
<dbReference type="GO" id="GO:0006099">
    <property type="term" value="P:tricarboxylic acid cycle"/>
    <property type="evidence" value="ECO:0007669"/>
    <property type="project" value="TreeGrafter"/>
</dbReference>
<dbReference type="CDD" id="cd02016">
    <property type="entry name" value="TPP_E1_OGDC_like"/>
    <property type="match status" value="1"/>
</dbReference>
<dbReference type="FunFam" id="3.40.50.11610:FF:000002">
    <property type="entry name" value="2-oxoglutarate dehydrogenase E1 component"/>
    <property type="match status" value="1"/>
</dbReference>
<dbReference type="FunFam" id="3.40.50.970:FF:000036">
    <property type="entry name" value="2-oxoglutarate dehydrogenase E1 component"/>
    <property type="match status" value="1"/>
</dbReference>
<dbReference type="Gene3D" id="3.40.50.12470">
    <property type="match status" value="1"/>
</dbReference>
<dbReference type="Gene3D" id="3.40.50.970">
    <property type="match status" value="1"/>
</dbReference>
<dbReference type="Gene3D" id="3.40.50.11610">
    <property type="entry name" value="Multifunctional 2-oxoglutarate metabolism enzyme, C-terminal domain"/>
    <property type="match status" value="1"/>
</dbReference>
<dbReference type="HAMAP" id="MF_01169">
    <property type="entry name" value="SucA_OdhA"/>
    <property type="match status" value="1"/>
</dbReference>
<dbReference type="InterPro" id="IPR011603">
    <property type="entry name" value="2oxoglutarate_DH_E1"/>
</dbReference>
<dbReference type="InterPro" id="IPR023784">
    <property type="entry name" value="2oxoglutarate_DH_E1_bac"/>
</dbReference>
<dbReference type="InterPro" id="IPR001017">
    <property type="entry name" value="DH_E1"/>
</dbReference>
<dbReference type="InterPro" id="IPR042179">
    <property type="entry name" value="KGD_C_sf"/>
</dbReference>
<dbReference type="InterPro" id="IPR031717">
    <property type="entry name" value="ODO-1/KGD_C"/>
</dbReference>
<dbReference type="InterPro" id="IPR029061">
    <property type="entry name" value="THDP-binding"/>
</dbReference>
<dbReference type="InterPro" id="IPR005475">
    <property type="entry name" value="Transketolase-like_Pyr-bd"/>
</dbReference>
<dbReference type="NCBIfam" id="TIGR00239">
    <property type="entry name" value="2oxo_dh_E1"/>
    <property type="match status" value="1"/>
</dbReference>
<dbReference type="NCBIfam" id="NF006914">
    <property type="entry name" value="PRK09404.1"/>
    <property type="match status" value="1"/>
</dbReference>
<dbReference type="NCBIfam" id="NF008907">
    <property type="entry name" value="PRK12270.1"/>
    <property type="match status" value="1"/>
</dbReference>
<dbReference type="PANTHER" id="PTHR23152:SF4">
    <property type="entry name" value="2-OXOADIPATE DEHYDROGENASE COMPLEX COMPONENT E1"/>
    <property type="match status" value="1"/>
</dbReference>
<dbReference type="PANTHER" id="PTHR23152">
    <property type="entry name" value="2-OXOGLUTARATE DEHYDROGENASE"/>
    <property type="match status" value="1"/>
</dbReference>
<dbReference type="Pfam" id="PF00676">
    <property type="entry name" value="E1_dh"/>
    <property type="match status" value="1"/>
</dbReference>
<dbReference type="Pfam" id="PF16870">
    <property type="entry name" value="OxoGdeHyase_C"/>
    <property type="match status" value="1"/>
</dbReference>
<dbReference type="Pfam" id="PF02779">
    <property type="entry name" value="Transket_pyr"/>
    <property type="match status" value="1"/>
</dbReference>
<dbReference type="PIRSF" id="PIRSF000157">
    <property type="entry name" value="Oxoglu_dh_E1"/>
    <property type="match status" value="1"/>
</dbReference>
<dbReference type="SMART" id="SM00861">
    <property type="entry name" value="Transket_pyr"/>
    <property type="match status" value="1"/>
</dbReference>
<dbReference type="SUPFAM" id="SSF52518">
    <property type="entry name" value="Thiamin diphosphate-binding fold (THDP-binding)"/>
    <property type="match status" value="2"/>
</dbReference>
<comment type="function">
    <text evidence="1">E1 component of the 2-oxoglutarate dehydrogenase (OGDH) complex which catalyzes the decarboxylation of 2-oxoglutarate, the first step in the conversion of 2-oxoglutarate to succinyl-CoA and CO(2).</text>
</comment>
<comment type="catalytic activity">
    <reaction evidence="1">
        <text>N(6)-[(R)-lipoyl]-L-lysyl-[protein] + 2-oxoglutarate + H(+) = N(6)-[(R)-S(8)-succinyldihydrolipoyl]-L-lysyl-[protein] + CO2</text>
        <dbReference type="Rhea" id="RHEA:12188"/>
        <dbReference type="Rhea" id="RHEA-COMP:10474"/>
        <dbReference type="Rhea" id="RHEA-COMP:20092"/>
        <dbReference type="ChEBI" id="CHEBI:15378"/>
        <dbReference type="ChEBI" id="CHEBI:16526"/>
        <dbReference type="ChEBI" id="CHEBI:16810"/>
        <dbReference type="ChEBI" id="CHEBI:83099"/>
        <dbReference type="ChEBI" id="CHEBI:83120"/>
        <dbReference type="EC" id="1.2.4.2"/>
    </reaction>
</comment>
<comment type="cofactor">
    <cofactor evidence="1">
        <name>thiamine diphosphate</name>
        <dbReference type="ChEBI" id="CHEBI:58937"/>
    </cofactor>
</comment>
<comment type="subunit">
    <text evidence="1">Homodimer. Part of the 2-oxoglutarate dehydrogenase (OGDH) complex composed of E1 (2-oxoglutarate dehydrogenase), E2 (dihydrolipoamide succinyltransferase) and E3 (dihydrolipoamide dehydrogenase); the complex contains multiple copies of the three enzymatic components (E1, E2 and E3).</text>
</comment>
<comment type="similarity">
    <text evidence="1">Belongs to the alpha-ketoglutarate dehydrogenase family.</text>
</comment>
<organism>
    <name type="scientific">Bacillus cereus (strain ZK / E33L)</name>
    <dbReference type="NCBI Taxonomy" id="288681"/>
    <lineage>
        <taxon>Bacteria</taxon>
        <taxon>Bacillati</taxon>
        <taxon>Bacillota</taxon>
        <taxon>Bacilli</taxon>
        <taxon>Bacillales</taxon>
        <taxon>Bacillaceae</taxon>
        <taxon>Bacillus</taxon>
        <taxon>Bacillus cereus group</taxon>
    </lineage>
</organism>
<accession>Q63EB1</accession>
<keyword id="KW-0324">Glycolysis</keyword>
<keyword id="KW-0560">Oxidoreductase</keyword>
<keyword id="KW-0786">Thiamine pyrophosphate</keyword>